<dbReference type="EMBL" id="AC005850">
    <property type="protein sequence ID" value="AAD25554.1"/>
    <property type="molecule type" value="Genomic_DNA"/>
</dbReference>
<dbReference type="EMBL" id="CP002684">
    <property type="protein sequence ID" value="AEE33849.1"/>
    <property type="molecule type" value="Genomic_DNA"/>
</dbReference>
<dbReference type="PIR" id="F96640">
    <property type="entry name" value="F96640"/>
</dbReference>
<dbReference type="RefSeq" id="NP_176348.1">
    <property type="nucleotide sequence ID" value="NM_104834.1"/>
</dbReference>
<dbReference type="SMR" id="Q9SY96"/>
<dbReference type="iPTMnet" id="Q9SY96"/>
<dbReference type="PaxDb" id="3702-AT1G61540.1"/>
<dbReference type="EnsemblPlants" id="AT1G61540.1">
    <property type="protein sequence ID" value="AT1G61540.1"/>
    <property type="gene ID" value="AT1G61540"/>
</dbReference>
<dbReference type="GeneID" id="842448"/>
<dbReference type="Gramene" id="AT1G61540.1">
    <property type="protein sequence ID" value="AT1G61540.1"/>
    <property type="gene ID" value="AT1G61540"/>
</dbReference>
<dbReference type="KEGG" id="ath:AT1G61540"/>
<dbReference type="Araport" id="AT1G61540"/>
<dbReference type="TAIR" id="AT1G61540"/>
<dbReference type="eggNOG" id="KOG1072">
    <property type="taxonomic scope" value="Eukaryota"/>
</dbReference>
<dbReference type="HOGENOM" id="CLU_032521_1_2_1"/>
<dbReference type="InParanoid" id="Q9SY96"/>
<dbReference type="OMA" id="KETHNEF"/>
<dbReference type="PhylomeDB" id="Q9SY96"/>
<dbReference type="PRO" id="PR:Q9SY96"/>
<dbReference type="Proteomes" id="UP000006548">
    <property type="component" value="Chromosome 1"/>
</dbReference>
<dbReference type="ExpressionAtlas" id="Q9SY96">
    <property type="expression patterns" value="baseline and differential"/>
</dbReference>
<dbReference type="CDD" id="cd22152">
    <property type="entry name" value="F-box_AtAFR-like"/>
    <property type="match status" value="1"/>
</dbReference>
<dbReference type="Gene3D" id="2.120.10.80">
    <property type="entry name" value="Kelch-type beta propeller"/>
    <property type="match status" value="1"/>
</dbReference>
<dbReference type="InterPro" id="IPR036047">
    <property type="entry name" value="F-box-like_dom_sf"/>
</dbReference>
<dbReference type="InterPro" id="IPR050354">
    <property type="entry name" value="F-box/kelch-repeat_ARATH"/>
</dbReference>
<dbReference type="InterPro" id="IPR001810">
    <property type="entry name" value="F-box_dom"/>
</dbReference>
<dbReference type="InterPro" id="IPR015915">
    <property type="entry name" value="Kelch-typ_b-propeller"/>
</dbReference>
<dbReference type="PANTHER" id="PTHR24414:SF95">
    <property type="entry name" value="F-BOX DOMAIN-CONTAINING PROTEIN"/>
    <property type="match status" value="1"/>
</dbReference>
<dbReference type="PANTHER" id="PTHR24414">
    <property type="entry name" value="F-BOX/KELCH-REPEAT PROTEIN SKIP4"/>
    <property type="match status" value="1"/>
</dbReference>
<dbReference type="Pfam" id="PF00646">
    <property type="entry name" value="F-box"/>
    <property type="match status" value="1"/>
</dbReference>
<dbReference type="Pfam" id="PF25210">
    <property type="entry name" value="Kelch_FKB95"/>
    <property type="match status" value="1"/>
</dbReference>
<dbReference type="SMART" id="SM00256">
    <property type="entry name" value="FBOX"/>
    <property type="match status" value="1"/>
</dbReference>
<dbReference type="SUPFAM" id="SSF81383">
    <property type="entry name" value="F-box domain"/>
    <property type="match status" value="1"/>
</dbReference>
<dbReference type="SUPFAM" id="SSF117281">
    <property type="entry name" value="Kelch motif"/>
    <property type="match status" value="1"/>
</dbReference>
<dbReference type="PROSITE" id="PS50181">
    <property type="entry name" value="FBOX"/>
    <property type="match status" value="1"/>
</dbReference>
<reference key="1">
    <citation type="journal article" date="2000" name="Nature">
        <title>Sequence and analysis of chromosome 1 of the plant Arabidopsis thaliana.</title>
        <authorList>
            <person name="Theologis A."/>
            <person name="Ecker J.R."/>
            <person name="Palm C.J."/>
            <person name="Federspiel N.A."/>
            <person name="Kaul S."/>
            <person name="White O."/>
            <person name="Alonso J."/>
            <person name="Altafi H."/>
            <person name="Araujo R."/>
            <person name="Bowman C.L."/>
            <person name="Brooks S.Y."/>
            <person name="Buehler E."/>
            <person name="Chan A."/>
            <person name="Chao Q."/>
            <person name="Chen H."/>
            <person name="Cheuk R.F."/>
            <person name="Chin C.W."/>
            <person name="Chung M.K."/>
            <person name="Conn L."/>
            <person name="Conway A.B."/>
            <person name="Conway A.R."/>
            <person name="Creasy T.H."/>
            <person name="Dewar K."/>
            <person name="Dunn P."/>
            <person name="Etgu P."/>
            <person name="Feldblyum T.V."/>
            <person name="Feng J.-D."/>
            <person name="Fong B."/>
            <person name="Fujii C.Y."/>
            <person name="Gill J.E."/>
            <person name="Goldsmith A.D."/>
            <person name="Haas B."/>
            <person name="Hansen N.F."/>
            <person name="Hughes B."/>
            <person name="Huizar L."/>
            <person name="Hunter J.L."/>
            <person name="Jenkins J."/>
            <person name="Johnson-Hopson C."/>
            <person name="Khan S."/>
            <person name="Khaykin E."/>
            <person name="Kim C.J."/>
            <person name="Koo H.L."/>
            <person name="Kremenetskaia I."/>
            <person name="Kurtz D.B."/>
            <person name="Kwan A."/>
            <person name="Lam B."/>
            <person name="Langin-Hooper S."/>
            <person name="Lee A."/>
            <person name="Lee J.M."/>
            <person name="Lenz C.A."/>
            <person name="Li J.H."/>
            <person name="Li Y.-P."/>
            <person name="Lin X."/>
            <person name="Liu S.X."/>
            <person name="Liu Z.A."/>
            <person name="Luros J.S."/>
            <person name="Maiti R."/>
            <person name="Marziali A."/>
            <person name="Militscher J."/>
            <person name="Miranda M."/>
            <person name="Nguyen M."/>
            <person name="Nierman W.C."/>
            <person name="Osborne B.I."/>
            <person name="Pai G."/>
            <person name="Peterson J."/>
            <person name="Pham P.K."/>
            <person name="Rizzo M."/>
            <person name="Rooney T."/>
            <person name="Rowley D."/>
            <person name="Sakano H."/>
            <person name="Salzberg S.L."/>
            <person name="Schwartz J.R."/>
            <person name="Shinn P."/>
            <person name="Southwick A.M."/>
            <person name="Sun H."/>
            <person name="Tallon L.J."/>
            <person name="Tambunga G."/>
            <person name="Toriumi M.J."/>
            <person name="Town C.D."/>
            <person name="Utterback T."/>
            <person name="Van Aken S."/>
            <person name="Vaysberg M."/>
            <person name="Vysotskaia V.S."/>
            <person name="Walker M."/>
            <person name="Wu D."/>
            <person name="Yu G."/>
            <person name="Fraser C.M."/>
            <person name="Venter J.C."/>
            <person name="Davis R.W."/>
        </authorList>
    </citation>
    <scope>NUCLEOTIDE SEQUENCE [LARGE SCALE GENOMIC DNA]</scope>
    <source>
        <strain>cv. Columbia</strain>
    </source>
</reference>
<reference key="2">
    <citation type="journal article" date="2017" name="Plant J.">
        <title>Araport11: a complete reannotation of the Arabidopsis thaliana reference genome.</title>
        <authorList>
            <person name="Cheng C.Y."/>
            <person name="Krishnakumar V."/>
            <person name="Chan A.P."/>
            <person name="Thibaud-Nissen F."/>
            <person name="Schobel S."/>
            <person name="Town C.D."/>
        </authorList>
    </citation>
    <scope>GENOME REANNOTATION</scope>
    <source>
        <strain>cv. Columbia</strain>
    </source>
</reference>
<keyword id="KW-0880">Kelch repeat</keyword>
<keyword id="KW-1185">Reference proteome</keyword>
<keyword id="KW-0677">Repeat</keyword>
<protein>
    <recommendedName>
        <fullName>Putative F-box/kelch-repeat protein At1g61540</fullName>
    </recommendedName>
</protein>
<evidence type="ECO:0000255" key="1">
    <source>
        <dbReference type="PROSITE-ProRule" id="PRU00080"/>
    </source>
</evidence>
<sequence>MNGEKPLRERKKKMPYPSPVTEEPISIMSLPYDLLLNCFSLVSRLYYPTLSLVSKTFRSIITSRELYEIRSRLNRTDKCLYLCFPYDMNTHWFTLCREPNRNVAENSSGYLLVQVPSPNGLLPVHSSSVIAVGSNIYKIGGTKSYRHKLWKRTRYSSSVSVLDCRSHRWRQAPGMRVARGCSSTVCEVDGKIYIAGGCKEDIGSLYWIEVFDPKTQTWGTLKNPCIEYQHDIGYRCEVKSLGLDGKIYMFGSEFVVYNFEEDRWKCIGRDKYNLYHAVDPMSRINSSSCVVDNVLFILDKGTRVFKWYDFKVSLWKELNGVEGLPDLSDRGYVKMVDLGGKIAVLWQECLTNKKIKRIWCAEISLERRDRDEIWGKVEWFDIVLSVHSSFSLLCADTISVVV</sequence>
<feature type="chain" id="PRO_0000283185" description="Putative F-box/kelch-repeat protein At1g61540">
    <location>
        <begin position="1"/>
        <end position="402"/>
    </location>
</feature>
<feature type="domain" description="F-box" evidence="1">
    <location>
        <begin position="24"/>
        <end position="70"/>
    </location>
</feature>
<feature type="repeat" description="Kelch 1">
    <location>
        <begin position="135"/>
        <end position="189"/>
    </location>
</feature>
<feature type="repeat" description="Kelch 2">
    <location>
        <begin position="191"/>
        <end position="240"/>
    </location>
</feature>
<feature type="repeat" description="Kelch 3">
    <location>
        <begin position="246"/>
        <end position="293"/>
    </location>
</feature>
<proteinExistence type="predicted"/>
<organism>
    <name type="scientific">Arabidopsis thaliana</name>
    <name type="common">Mouse-ear cress</name>
    <dbReference type="NCBI Taxonomy" id="3702"/>
    <lineage>
        <taxon>Eukaryota</taxon>
        <taxon>Viridiplantae</taxon>
        <taxon>Streptophyta</taxon>
        <taxon>Embryophyta</taxon>
        <taxon>Tracheophyta</taxon>
        <taxon>Spermatophyta</taxon>
        <taxon>Magnoliopsida</taxon>
        <taxon>eudicotyledons</taxon>
        <taxon>Gunneridae</taxon>
        <taxon>Pentapetalae</taxon>
        <taxon>rosids</taxon>
        <taxon>malvids</taxon>
        <taxon>Brassicales</taxon>
        <taxon>Brassicaceae</taxon>
        <taxon>Camelineae</taxon>
        <taxon>Arabidopsis</taxon>
    </lineage>
</organism>
<gene>
    <name type="ordered locus">At1g61540</name>
    <name type="ORF">T25B24.11</name>
</gene>
<name>FBK25_ARATH</name>
<accession>Q9SY96</accession>